<comment type="function">
    <text evidence="1">Na(+)/H(+) antiporter that extrudes sodium in exchange for external protons.</text>
</comment>
<comment type="catalytic activity">
    <reaction evidence="1">
        <text>Na(+)(in) + 2 H(+)(out) = Na(+)(out) + 2 H(+)(in)</text>
        <dbReference type="Rhea" id="RHEA:29251"/>
        <dbReference type="ChEBI" id="CHEBI:15378"/>
        <dbReference type="ChEBI" id="CHEBI:29101"/>
    </reaction>
    <physiologicalReaction direction="left-to-right" evidence="1">
        <dbReference type="Rhea" id="RHEA:29252"/>
    </physiologicalReaction>
</comment>
<comment type="subcellular location">
    <subcellularLocation>
        <location evidence="1">Cell inner membrane</location>
        <topology evidence="1">Multi-pass membrane protein</topology>
    </subcellularLocation>
</comment>
<comment type="similarity">
    <text evidence="1">Belongs to the NhaA Na(+)/H(+) (TC 2.A.33) antiporter family.</text>
</comment>
<dbReference type="EMBL" id="CP000082">
    <property type="protein sequence ID" value="AAZ19686.1"/>
    <property type="molecule type" value="Genomic_DNA"/>
</dbReference>
<dbReference type="RefSeq" id="WP_011281097.1">
    <property type="nucleotide sequence ID" value="NC_007204.1"/>
</dbReference>
<dbReference type="SMR" id="Q4FQM2"/>
<dbReference type="STRING" id="259536.Psyc_1838"/>
<dbReference type="KEGG" id="par:Psyc_1838"/>
<dbReference type="eggNOG" id="COG3004">
    <property type="taxonomic scope" value="Bacteria"/>
</dbReference>
<dbReference type="HOGENOM" id="CLU_015803_1_0_6"/>
<dbReference type="OrthoDB" id="9808135at2"/>
<dbReference type="Proteomes" id="UP000000546">
    <property type="component" value="Chromosome"/>
</dbReference>
<dbReference type="GO" id="GO:0005886">
    <property type="term" value="C:plasma membrane"/>
    <property type="evidence" value="ECO:0007669"/>
    <property type="project" value="UniProtKB-SubCell"/>
</dbReference>
<dbReference type="GO" id="GO:0015385">
    <property type="term" value="F:sodium:proton antiporter activity"/>
    <property type="evidence" value="ECO:0007669"/>
    <property type="project" value="TreeGrafter"/>
</dbReference>
<dbReference type="GO" id="GO:0006885">
    <property type="term" value="P:regulation of pH"/>
    <property type="evidence" value="ECO:0007669"/>
    <property type="project" value="InterPro"/>
</dbReference>
<dbReference type="Gene3D" id="1.20.1530.10">
    <property type="entry name" value="Na+/H+ antiporter like domain"/>
    <property type="match status" value="1"/>
</dbReference>
<dbReference type="HAMAP" id="MF_01844">
    <property type="entry name" value="NhaA"/>
    <property type="match status" value="1"/>
</dbReference>
<dbReference type="InterPro" id="IPR023171">
    <property type="entry name" value="Na/H_antiporter_dom_sf"/>
</dbReference>
<dbReference type="InterPro" id="IPR004670">
    <property type="entry name" value="NhaA"/>
</dbReference>
<dbReference type="NCBIfam" id="TIGR00773">
    <property type="entry name" value="NhaA"/>
    <property type="match status" value="1"/>
</dbReference>
<dbReference type="NCBIfam" id="NF007111">
    <property type="entry name" value="PRK09560.1"/>
    <property type="match status" value="1"/>
</dbReference>
<dbReference type="NCBIfam" id="NF007112">
    <property type="entry name" value="PRK09561.1"/>
    <property type="match status" value="1"/>
</dbReference>
<dbReference type="PANTHER" id="PTHR30341:SF0">
    <property type="entry name" value="NA(+)_H(+) ANTIPORTER NHAA"/>
    <property type="match status" value="1"/>
</dbReference>
<dbReference type="PANTHER" id="PTHR30341">
    <property type="entry name" value="SODIUM ION/PROTON ANTIPORTER NHAA-RELATED"/>
    <property type="match status" value="1"/>
</dbReference>
<dbReference type="Pfam" id="PF06965">
    <property type="entry name" value="Na_H_antiport_1"/>
    <property type="match status" value="1"/>
</dbReference>
<sequence length="400" mass="43162">MAIHKIRAFFNLEASGGIVLALAAIAAMIIANTSLNTWYESFIHAPVAIQIGSFSIAKDAHHWINDGLMAVFFFLVGLELKREVLIGELSNVKQIILPAGAALGGMVMPAIVYLFFNYNEPEFWRGWAIPTATDIAFALGILSLLGNRVPNSLKVFLVSIAIFDDIGAIIIIALFYTNDLSLGSLAIAGLCLPFLYMLNRRNVTSITPYLLIGVIMWIAVLKSGIHATLAGVVLALFIPLFDRTDPEHSPLEELEHDLQNTVSYGILPLFAFANAGISLKGAGFGELFHSVPLGIAAGLFIGKQVGVMLMCWLIFKLGISTMPKGMNFKQIYGAALLCGVGFTMSLFIGGLAFAGETPLFDERLGIIMGSIVSGIAGYMMLKTTLKDEVNVTSVDLTRHS</sequence>
<name>NHAA_PSYA2</name>
<gene>
    <name evidence="1" type="primary">nhaA</name>
    <name type="ordered locus">Psyc_1838</name>
</gene>
<keyword id="KW-0050">Antiport</keyword>
<keyword id="KW-0997">Cell inner membrane</keyword>
<keyword id="KW-1003">Cell membrane</keyword>
<keyword id="KW-0406">Ion transport</keyword>
<keyword id="KW-0472">Membrane</keyword>
<keyword id="KW-1185">Reference proteome</keyword>
<keyword id="KW-0915">Sodium</keyword>
<keyword id="KW-0739">Sodium transport</keyword>
<keyword id="KW-0812">Transmembrane</keyword>
<keyword id="KW-1133">Transmembrane helix</keyword>
<keyword id="KW-0813">Transport</keyword>
<evidence type="ECO:0000255" key="1">
    <source>
        <dbReference type="HAMAP-Rule" id="MF_01844"/>
    </source>
</evidence>
<reference key="1">
    <citation type="journal article" date="2010" name="Appl. Environ. Microbiol.">
        <title>The genome sequence of Psychrobacter arcticus 273-4, a psychroactive Siberian permafrost bacterium, reveals mechanisms for adaptation to low-temperature growth.</title>
        <authorList>
            <person name="Ayala-del-Rio H.L."/>
            <person name="Chain P.S."/>
            <person name="Grzymski J.J."/>
            <person name="Ponder M.A."/>
            <person name="Ivanova N."/>
            <person name="Bergholz P.W."/>
            <person name="Di Bartolo G."/>
            <person name="Hauser L."/>
            <person name="Land M."/>
            <person name="Bakermans C."/>
            <person name="Rodrigues D."/>
            <person name="Klappenbach J."/>
            <person name="Zarka D."/>
            <person name="Larimer F."/>
            <person name="Richardson P."/>
            <person name="Murray A."/>
            <person name="Thomashow M."/>
            <person name="Tiedje J.M."/>
        </authorList>
    </citation>
    <scope>NUCLEOTIDE SEQUENCE [LARGE SCALE GENOMIC DNA]</scope>
    <source>
        <strain>DSM 17307 / VKM B-2377 / 273-4</strain>
    </source>
</reference>
<organism>
    <name type="scientific">Psychrobacter arcticus (strain DSM 17307 / VKM B-2377 / 273-4)</name>
    <dbReference type="NCBI Taxonomy" id="259536"/>
    <lineage>
        <taxon>Bacteria</taxon>
        <taxon>Pseudomonadati</taxon>
        <taxon>Pseudomonadota</taxon>
        <taxon>Gammaproteobacteria</taxon>
        <taxon>Moraxellales</taxon>
        <taxon>Moraxellaceae</taxon>
        <taxon>Psychrobacter</taxon>
    </lineage>
</organism>
<feature type="chain" id="PRO_0000334381" description="Na(+)/H(+) antiporter NhaA">
    <location>
        <begin position="1"/>
        <end position="400"/>
    </location>
</feature>
<feature type="transmembrane region" description="Helical" evidence="1">
    <location>
        <begin position="10"/>
        <end position="30"/>
    </location>
</feature>
<feature type="transmembrane region" description="Helical" evidence="1">
    <location>
        <begin position="60"/>
        <end position="80"/>
    </location>
</feature>
<feature type="transmembrane region" description="Helical" evidence="1">
    <location>
        <begin position="95"/>
        <end position="115"/>
    </location>
</feature>
<feature type="transmembrane region" description="Helical" evidence="1">
    <location>
        <begin position="126"/>
        <end position="146"/>
    </location>
</feature>
<feature type="transmembrane region" description="Helical" evidence="1">
    <location>
        <begin position="155"/>
        <end position="175"/>
    </location>
</feature>
<feature type="transmembrane region" description="Helical" evidence="1">
    <location>
        <begin position="178"/>
        <end position="198"/>
    </location>
</feature>
<feature type="transmembrane region" description="Helical" evidence="1">
    <location>
        <begin position="218"/>
        <end position="238"/>
    </location>
</feature>
<feature type="transmembrane region" description="Helical" evidence="1">
    <location>
        <begin position="265"/>
        <end position="285"/>
    </location>
</feature>
<feature type="transmembrane region" description="Helical" evidence="1">
    <location>
        <begin position="295"/>
        <end position="315"/>
    </location>
</feature>
<feature type="transmembrane region" description="Helical" evidence="1">
    <location>
        <begin position="334"/>
        <end position="354"/>
    </location>
</feature>
<feature type="transmembrane region" description="Helical" evidence="1">
    <location>
        <begin position="364"/>
        <end position="384"/>
    </location>
</feature>
<accession>Q4FQM2</accession>
<proteinExistence type="inferred from homology"/>
<protein>
    <recommendedName>
        <fullName evidence="1">Na(+)/H(+) antiporter NhaA</fullName>
    </recommendedName>
    <alternativeName>
        <fullName evidence="1">Sodium/proton antiporter NhaA</fullName>
    </alternativeName>
</protein>